<reference key="1">
    <citation type="journal article" date="2005" name="Genome Res.">
        <title>Complete genome sequence of the hyperthermophilic archaeon Thermococcus kodakaraensis KOD1 and comparison with Pyrococcus genomes.</title>
        <authorList>
            <person name="Fukui T."/>
            <person name="Atomi H."/>
            <person name="Kanai T."/>
            <person name="Matsumi R."/>
            <person name="Fujiwara S."/>
            <person name="Imanaka T."/>
        </authorList>
    </citation>
    <scope>NUCLEOTIDE SEQUENCE [LARGE SCALE GENOMIC DNA]</scope>
    <source>
        <strain>ATCC BAA-918 / JCM 12380 / KOD1</strain>
    </source>
</reference>
<keyword id="KW-0001">2Fe-2S</keyword>
<keyword id="KW-0249">Electron transport</keyword>
<keyword id="KW-0274">FAD</keyword>
<keyword id="KW-0285">Flavoprotein</keyword>
<keyword id="KW-0408">Iron</keyword>
<keyword id="KW-0411">Iron-sulfur</keyword>
<keyword id="KW-0479">Metal-binding</keyword>
<keyword id="KW-0665">Pyrimidine biosynthesis</keyword>
<keyword id="KW-1185">Reference proteome</keyword>
<keyword id="KW-0813">Transport</keyword>
<comment type="function">
    <text evidence="1">Responsible for channeling the electrons from the oxidation of dihydroorotate from the FMN redox center in the PyrD type B subunit to the ultimate electron acceptor NAD(+).</text>
</comment>
<comment type="cofactor">
    <cofactor evidence="1">
        <name>[2Fe-2S] cluster</name>
        <dbReference type="ChEBI" id="CHEBI:190135"/>
    </cofactor>
    <text evidence="1">Binds 1 [2Fe-2S] cluster per subunit.</text>
</comment>
<comment type="cofactor">
    <cofactor evidence="1">
        <name>FAD</name>
        <dbReference type="ChEBI" id="CHEBI:57692"/>
    </cofactor>
    <text evidence="1">Binds 1 FAD per subunit.</text>
</comment>
<comment type="pathway">
    <text evidence="1">Pyrimidine metabolism; UMP biosynthesis via de novo pathway; orotate from (S)-dihydroorotate (NAD(+) route): step 1/1.</text>
</comment>
<comment type="subunit">
    <text evidence="1">Heterotetramer of 2 PyrK and 2 PyrD type B subunits.</text>
</comment>
<comment type="similarity">
    <text evidence="1">Belongs to the PyrK family.</text>
</comment>
<name>PYRK_THEKO</name>
<gene>
    <name evidence="1" type="primary">pyrK</name>
    <name type="ordered locus">TK1806</name>
</gene>
<proteinExistence type="inferred from homology"/>
<dbReference type="EMBL" id="AP006878">
    <property type="protein sequence ID" value="BAD85995.1"/>
    <property type="molecule type" value="Genomic_DNA"/>
</dbReference>
<dbReference type="RefSeq" id="WP_011250757.1">
    <property type="nucleotide sequence ID" value="NC_006624.1"/>
</dbReference>
<dbReference type="SMR" id="Q5JJ90"/>
<dbReference type="FunCoup" id="Q5JJ90">
    <property type="interactions" value="55"/>
</dbReference>
<dbReference type="STRING" id="69014.TK1806"/>
<dbReference type="EnsemblBacteria" id="BAD85995">
    <property type="protein sequence ID" value="BAD85995"/>
    <property type="gene ID" value="TK1806"/>
</dbReference>
<dbReference type="GeneID" id="78448337"/>
<dbReference type="KEGG" id="tko:TK1806"/>
<dbReference type="PATRIC" id="fig|69014.16.peg.1762"/>
<dbReference type="eggNOG" id="arCOG02199">
    <property type="taxonomic scope" value="Archaea"/>
</dbReference>
<dbReference type="HOGENOM" id="CLU_003827_1_1_2"/>
<dbReference type="InParanoid" id="Q5JJ90"/>
<dbReference type="OrthoDB" id="35401at2157"/>
<dbReference type="PhylomeDB" id="Q5JJ90"/>
<dbReference type="UniPathway" id="UPA00070">
    <property type="reaction ID" value="UER00945"/>
</dbReference>
<dbReference type="Proteomes" id="UP000000536">
    <property type="component" value="Chromosome"/>
</dbReference>
<dbReference type="GO" id="GO:0051537">
    <property type="term" value="F:2 iron, 2 sulfur cluster binding"/>
    <property type="evidence" value="ECO:0007669"/>
    <property type="project" value="UniProtKB-KW"/>
</dbReference>
<dbReference type="GO" id="GO:0009055">
    <property type="term" value="F:electron transfer activity"/>
    <property type="evidence" value="ECO:0007669"/>
    <property type="project" value="UniProtKB-UniRule"/>
</dbReference>
<dbReference type="GO" id="GO:0050660">
    <property type="term" value="F:flavin adenine dinucleotide binding"/>
    <property type="evidence" value="ECO:0007669"/>
    <property type="project" value="InterPro"/>
</dbReference>
<dbReference type="GO" id="GO:0046872">
    <property type="term" value="F:metal ion binding"/>
    <property type="evidence" value="ECO:0007669"/>
    <property type="project" value="UniProtKB-KW"/>
</dbReference>
<dbReference type="GO" id="GO:0016491">
    <property type="term" value="F:oxidoreductase activity"/>
    <property type="evidence" value="ECO:0007669"/>
    <property type="project" value="InterPro"/>
</dbReference>
<dbReference type="GO" id="GO:0044205">
    <property type="term" value="P:'de novo' UMP biosynthetic process"/>
    <property type="evidence" value="ECO:0007669"/>
    <property type="project" value="UniProtKB-UniRule"/>
</dbReference>
<dbReference type="CDD" id="cd06220">
    <property type="entry name" value="DHOD_e_trans_like2"/>
    <property type="match status" value="1"/>
</dbReference>
<dbReference type="Gene3D" id="2.10.240.10">
    <property type="entry name" value="Dihydroorotate dehydrogenase, electron transfer subunit"/>
    <property type="match status" value="1"/>
</dbReference>
<dbReference type="Gene3D" id="3.40.50.80">
    <property type="entry name" value="Nucleotide-binding domain of ferredoxin-NADP reductase (FNR) module"/>
    <property type="match status" value="1"/>
</dbReference>
<dbReference type="Gene3D" id="2.40.30.10">
    <property type="entry name" value="Translation factors"/>
    <property type="match status" value="1"/>
</dbReference>
<dbReference type="HAMAP" id="MF_01211">
    <property type="entry name" value="DHODB_Fe_S_bind"/>
    <property type="match status" value="1"/>
</dbReference>
<dbReference type="InterPro" id="IPR012165">
    <property type="entry name" value="Cyt_c3_hydrogenase_gsu"/>
</dbReference>
<dbReference type="InterPro" id="IPR037117">
    <property type="entry name" value="Dihydroorotate_DH_ele_sf"/>
</dbReference>
<dbReference type="InterPro" id="IPR019480">
    <property type="entry name" value="Dihydroorotate_DH_Fe-S-bd"/>
</dbReference>
<dbReference type="InterPro" id="IPR023455">
    <property type="entry name" value="Dihydroorotate_DHASE_ETsu"/>
</dbReference>
<dbReference type="InterPro" id="IPR017927">
    <property type="entry name" value="FAD-bd_FR_type"/>
</dbReference>
<dbReference type="InterPro" id="IPR039261">
    <property type="entry name" value="FNR_nucleotide-bd"/>
</dbReference>
<dbReference type="InterPro" id="IPR001433">
    <property type="entry name" value="OxRdtase_FAD/NAD-bd"/>
</dbReference>
<dbReference type="InterPro" id="IPR050353">
    <property type="entry name" value="PyrK_electron_transfer"/>
</dbReference>
<dbReference type="InterPro" id="IPR017938">
    <property type="entry name" value="Riboflavin_synthase-like_b-brl"/>
</dbReference>
<dbReference type="NCBIfam" id="NF000796">
    <property type="entry name" value="PRK00054.1-1"/>
    <property type="match status" value="1"/>
</dbReference>
<dbReference type="PANTHER" id="PTHR43513">
    <property type="entry name" value="DIHYDROOROTATE DEHYDROGENASE B (NAD(+)), ELECTRON TRANSFER SUBUNIT"/>
    <property type="match status" value="1"/>
</dbReference>
<dbReference type="PANTHER" id="PTHR43513:SF3">
    <property type="entry name" value="DIHYDROOROTATE DEHYDROGENASE B (NAD(+)), ELECTRON TRANSFER SUBUNIT-RELATED"/>
    <property type="match status" value="1"/>
</dbReference>
<dbReference type="Pfam" id="PF10418">
    <property type="entry name" value="DHODB_Fe-S_bind"/>
    <property type="match status" value="1"/>
</dbReference>
<dbReference type="Pfam" id="PF00175">
    <property type="entry name" value="NAD_binding_1"/>
    <property type="match status" value="1"/>
</dbReference>
<dbReference type="PIRSF" id="PIRSF006816">
    <property type="entry name" value="Cyc3_hyd_g"/>
    <property type="match status" value="1"/>
</dbReference>
<dbReference type="PRINTS" id="PR00409">
    <property type="entry name" value="PHDIOXRDTASE"/>
</dbReference>
<dbReference type="SUPFAM" id="SSF52343">
    <property type="entry name" value="Ferredoxin reductase-like, C-terminal NADP-linked domain"/>
    <property type="match status" value="1"/>
</dbReference>
<dbReference type="SUPFAM" id="SSF63380">
    <property type="entry name" value="Riboflavin synthase domain-like"/>
    <property type="match status" value="1"/>
</dbReference>
<dbReference type="PROSITE" id="PS00197">
    <property type="entry name" value="2FE2S_FER_1"/>
    <property type="match status" value="1"/>
</dbReference>
<dbReference type="PROSITE" id="PS51384">
    <property type="entry name" value="FAD_FR"/>
    <property type="match status" value="1"/>
</dbReference>
<accession>Q5JJ90</accession>
<evidence type="ECO:0000255" key="1">
    <source>
        <dbReference type="HAMAP-Rule" id="MF_01211"/>
    </source>
</evidence>
<sequence>MYRVVTIEEVWDVAKDVKAFRFNENIEFAPGQFIMAWLPGVGEKPFSLAWEDMIVVKRVGPFTTKLFELKEGDRLWIRGPYGHGFIKRGEKVALVGGGIGIPPLYAFAKKNQGKFRQMTLIYGARSKDELSLLDIENYVDDAVITTDDGSAGRKGFPTEVLAERREEFDQVYACGPEPMLKAVLKVMNYKNVQISAERYMKCGIGVCGSCNLGKYLVCRDGPVFEGEKLVGLL</sequence>
<protein>
    <recommendedName>
        <fullName evidence="1">Probable dihydroorotate dehydrogenase B (NAD(+)), electron transfer subunit</fullName>
    </recommendedName>
    <alternativeName>
        <fullName evidence="1">Dihydroorotate oxidase B, electron transfer subunit</fullName>
    </alternativeName>
</protein>
<organism>
    <name type="scientific">Thermococcus kodakarensis (strain ATCC BAA-918 / JCM 12380 / KOD1)</name>
    <name type="common">Pyrococcus kodakaraensis (strain KOD1)</name>
    <dbReference type="NCBI Taxonomy" id="69014"/>
    <lineage>
        <taxon>Archaea</taxon>
        <taxon>Methanobacteriati</taxon>
        <taxon>Methanobacteriota</taxon>
        <taxon>Thermococci</taxon>
        <taxon>Thermococcales</taxon>
        <taxon>Thermococcaceae</taxon>
        <taxon>Thermococcus</taxon>
    </lineage>
</organism>
<feature type="chain" id="PRO_0000148382" description="Probable dihydroorotate dehydrogenase B (NAD(+)), electron transfer subunit">
    <location>
        <begin position="1"/>
        <end position="233"/>
    </location>
</feature>
<feature type="domain" description="FAD-binding FR-type" evidence="1">
    <location>
        <begin position="1"/>
        <end position="87"/>
    </location>
</feature>
<feature type="binding site" evidence="1">
    <location>
        <position position="202"/>
    </location>
    <ligand>
        <name>[2Fe-2S] cluster</name>
        <dbReference type="ChEBI" id="CHEBI:190135"/>
    </ligand>
</feature>
<feature type="binding site" evidence="1">
    <location>
        <position position="207"/>
    </location>
    <ligand>
        <name>[2Fe-2S] cluster</name>
        <dbReference type="ChEBI" id="CHEBI:190135"/>
    </ligand>
</feature>
<feature type="binding site" evidence="1">
    <location>
        <position position="210"/>
    </location>
    <ligand>
        <name>[2Fe-2S] cluster</name>
        <dbReference type="ChEBI" id="CHEBI:190135"/>
    </ligand>
</feature>
<feature type="binding site" evidence="1">
    <location>
        <position position="218"/>
    </location>
    <ligand>
        <name>[2Fe-2S] cluster</name>
        <dbReference type="ChEBI" id="CHEBI:190135"/>
    </ligand>
</feature>